<proteinExistence type="inferred from homology"/>
<organism>
    <name type="scientific">Escherichia coli O7:K1 (strain IAI39 / ExPEC)</name>
    <dbReference type="NCBI Taxonomy" id="585057"/>
    <lineage>
        <taxon>Bacteria</taxon>
        <taxon>Pseudomonadati</taxon>
        <taxon>Pseudomonadota</taxon>
        <taxon>Gammaproteobacteria</taxon>
        <taxon>Enterobacterales</taxon>
        <taxon>Enterobacteriaceae</taxon>
        <taxon>Escherichia</taxon>
    </lineage>
</organism>
<dbReference type="EC" id="5.3.1.14" evidence="1"/>
<dbReference type="EMBL" id="CU928164">
    <property type="protein sequence ID" value="CAR19211.1"/>
    <property type="molecule type" value="Genomic_DNA"/>
</dbReference>
<dbReference type="RefSeq" id="WP_012602491.1">
    <property type="nucleotide sequence ID" value="NC_011750.1"/>
</dbReference>
<dbReference type="RefSeq" id="YP_002409022.1">
    <property type="nucleotide sequence ID" value="NC_011750.1"/>
</dbReference>
<dbReference type="SMR" id="B7NUA3"/>
<dbReference type="STRING" id="585057.ECIAI39_3092"/>
<dbReference type="KEGG" id="ect:ECIAI39_3092"/>
<dbReference type="PATRIC" id="fig|585057.6.peg.3207"/>
<dbReference type="HOGENOM" id="CLU_052790_0_0_6"/>
<dbReference type="UniPathway" id="UPA00541">
    <property type="reaction ID" value="UER00601"/>
</dbReference>
<dbReference type="Proteomes" id="UP000000749">
    <property type="component" value="Chromosome"/>
</dbReference>
<dbReference type="GO" id="GO:0005737">
    <property type="term" value="C:cytoplasm"/>
    <property type="evidence" value="ECO:0007669"/>
    <property type="project" value="UniProtKB-SubCell"/>
</dbReference>
<dbReference type="GO" id="GO:0008740">
    <property type="term" value="F:L-rhamnose isomerase activity"/>
    <property type="evidence" value="ECO:0007669"/>
    <property type="project" value="UniProtKB-UniRule"/>
</dbReference>
<dbReference type="GO" id="GO:0030145">
    <property type="term" value="F:manganese ion binding"/>
    <property type="evidence" value="ECO:0007669"/>
    <property type="project" value="UniProtKB-UniRule"/>
</dbReference>
<dbReference type="GO" id="GO:0019324">
    <property type="term" value="P:L-lyxose metabolic process"/>
    <property type="evidence" value="ECO:0007669"/>
    <property type="project" value="TreeGrafter"/>
</dbReference>
<dbReference type="GO" id="GO:0019301">
    <property type="term" value="P:rhamnose catabolic process"/>
    <property type="evidence" value="ECO:0007669"/>
    <property type="project" value="UniProtKB-UniRule"/>
</dbReference>
<dbReference type="FunFam" id="3.20.20.150:FF:000006">
    <property type="entry name" value="L-rhamnose isomerase"/>
    <property type="match status" value="1"/>
</dbReference>
<dbReference type="Gene3D" id="3.20.20.150">
    <property type="entry name" value="Divalent-metal-dependent TIM barrel enzymes"/>
    <property type="match status" value="1"/>
</dbReference>
<dbReference type="HAMAP" id="MF_00541">
    <property type="entry name" value="RhaA"/>
    <property type="match status" value="1"/>
</dbReference>
<dbReference type="InterPro" id="IPR050337">
    <property type="entry name" value="L-rhamnose_isomerase"/>
</dbReference>
<dbReference type="InterPro" id="IPR009308">
    <property type="entry name" value="Rhamnose_isomerase"/>
</dbReference>
<dbReference type="InterPro" id="IPR036237">
    <property type="entry name" value="Xyl_isomerase-like_sf"/>
</dbReference>
<dbReference type="NCBIfam" id="NF002203">
    <property type="entry name" value="PRK01076.1"/>
    <property type="match status" value="1"/>
</dbReference>
<dbReference type="NCBIfam" id="TIGR01748">
    <property type="entry name" value="rhaA"/>
    <property type="match status" value="1"/>
</dbReference>
<dbReference type="PANTHER" id="PTHR30268">
    <property type="entry name" value="L-RHAMNOSE ISOMERASE"/>
    <property type="match status" value="1"/>
</dbReference>
<dbReference type="PANTHER" id="PTHR30268:SF0">
    <property type="entry name" value="L-RHAMNOSE ISOMERASE"/>
    <property type="match status" value="1"/>
</dbReference>
<dbReference type="Pfam" id="PF06134">
    <property type="entry name" value="RhaA"/>
    <property type="match status" value="1"/>
</dbReference>
<dbReference type="SUPFAM" id="SSF51658">
    <property type="entry name" value="Xylose isomerase-like"/>
    <property type="match status" value="1"/>
</dbReference>
<evidence type="ECO:0000255" key="1">
    <source>
        <dbReference type="HAMAP-Rule" id="MF_00541"/>
    </source>
</evidence>
<feature type="chain" id="PRO_1000128878" description="L-rhamnose isomerase">
    <location>
        <begin position="1"/>
        <end position="419"/>
    </location>
</feature>
<feature type="binding site" evidence="1">
    <location>
        <position position="262"/>
    </location>
    <ligand>
        <name>Mn(2+)</name>
        <dbReference type="ChEBI" id="CHEBI:29035"/>
    </ligand>
</feature>
<feature type="binding site" evidence="1">
    <location>
        <position position="294"/>
    </location>
    <ligand>
        <name>Mn(2+)</name>
        <dbReference type="ChEBI" id="CHEBI:29035"/>
    </ligand>
</feature>
<feature type="binding site" evidence="1">
    <location>
        <position position="296"/>
    </location>
    <ligand>
        <name>Mn(2+)</name>
        <dbReference type="ChEBI" id="CHEBI:29035"/>
    </ligand>
</feature>
<sequence length="419" mass="47146">MTTQLEQAWELAKQRFAAVGIDVEEALRQLDRLPVSMHCWQGDDVSGFENPEGSLTGGIQATGNYPGKARNASELRADLEQAMRLIPGPKRLNLHAIYLESDTSVARDQIKPEHFKNWVEWAKANQLGLDFNPSCFSHPLSADGFTLSHADDSIRQFWIDHCKASRRVSAYFGEQLGTPSVMNIWIPDGMKDITVDRLAPRQRLLAALDEVISEKLDPAHHIDAVESKLFGIGAESYTVGSNEFYMGYATSRQTALCLDAGHFHPTEVISDKISAAMLYVPQLLLHVSRPVRWDSDHVVLLDDETQAIASEIVRHDLFDRVHIGLDFFDASINRIAAWVIGTRNMKKALLRALLEPTTELRKLEAAGDYTARLALLEEQKSLPWQAVWEMYCQRHDTPVGSEWLESVRAYEKAILSQRG</sequence>
<comment type="function">
    <text evidence="1">Catalyzes the interconversion of L-rhamnose and L-rhamnulose.</text>
</comment>
<comment type="catalytic activity">
    <reaction evidence="1">
        <text>L-rhamnopyranose = L-rhamnulose</text>
        <dbReference type="Rhea" id="RHEA:23160"/>
        <dbReference type="ChEBI" id="CHEBI:17897"/>
        <dbReference type="ChEBI" id="CHEBI:62346"/>
        <dbReference type="EC" id="5.3.1.14"/>
    </reaction>
</comment>
<comment type="cofactor">
    <cofactor evidence="1">
        <name>Mn(2+)</name>
        <dbReference type="ChEBI" id="CHEBI:29035"/>
    </cofactor>
    <text evidence="1">Binds 1 Mn(2+) ion per subunit.</text>
</comment>
<comment type="pathway">
    <text evidence="1">Carbohydrate degradation; L-rhamnose degradation; glycerone phosphate from L-rhamnose: step 1/3.</text>
</comment>
<comment type="subunit">
    <text evidence="1">Homotetramer.</text>
</comment>
<comment type="subcellular location">
    <subcellularLocation>
        <location evidence="1">Cytoplasm</location>
    </subcellularLocation>
</comment>
<comment type="similarity">
    <text evidence="1">Belongs to the rhamnose isomerase family.</text>
</comment>
<gene>
    <name evidence="1" type="primary">rhaA</name>
    <name type="ordered locus">ECIAI39_3092</name>
</gene>
<name>RHAA_ECO7I</name>
<accession>B7NUA3</accession>
<keyword id="KW-0963">Cytoplasm</keyword>
<keyword id="KW-0413">Isomerase</keyword>
<keyword id="KW-0464">Manganese</keyword>
<keyword id="KW-0479">Metal-binding</keyword>
<keyword id="KW-0684">Rhamnose metabolism</keyword>
<protein>
    <recommendedName>
        <fullName evidence="1">L-rhamnose isomerase</fullName>
        <ecNumber evidence="1">5.3.1.14</ecNumber>
    </recommendedName>
</protein>
<reference key="1">
    <citation type="journal article" date="2009" name="PLoS Genet.">
        <title>Organised genome dynamics in the Escherichia coli species results in highly diverse adaptive paths.</title>
        <authorList>
            <person name="Touchon M."/>
            <person name="Hoede C."/>
            <person name="Tenaillon O."/>
            <person name="Barbe V."/>
            <person name="Baeriswyl S."/>
            <person name="Bidet P."/>
            <person name="Bingen E."/>
            <person name="Bonacorsi S."/>
            <person name="Bouchier C."/>
            <person name="Bouvet O."/>
            <person name="Calteau A."/>
            <person name="Chiapello H."/>
            <person name="Clermont O."/>
            <person name="Cruveiller S."/>
            <person name="Danchin A."/>
            <person name="Diard M."/>
            <person name="Dossat C."/>
            <person name="Karoui M.E."/>
            <person name="Frapy E."/>
            <person name="Garry L."/>
            <person name="Ghigo J.M."/>
            <person name="Gilles A.M."/>
            <person name="Johnson J."/>
            <person name="Le Bouguenec C."/>
            <person name="Lescat M."/>
            <person name="Mangenot S."/>
            <person name="Martinez-Jehanne V."/>
            <person name="Matic I."/>
            <person name="Nassif X."/>
            <person name="Oztas S."/>
            <person name="Petit M.A."/>
            <person name="Pichon C."/>
            <person name="Rouy Z."/>
            <person name="Ruf C.S."/>
            <person name="Schneider D."/>
            <person name="Tourret J."/>
            <person name="Vacherie B."/>
            <person name="Vallenet D."/>
            <person name="Medigue C."/>
            <person name="Rocha E.P.C."/>
            <person name="Denamur E."/>
        </authorList>
    </citation>
    <scope>NUCLEOTIDE SEQUENCE [LARGE SCALE GENOMIC DNA]</scope>
    <source>
        <strain>IAI39 / ExPEC</strain>
    </source>
</reference>